<feature type="chain" id="PRO_1000013829" description="Putative 4-hydroxy-4-methyl-2-oxoglutarate aldolase">
    <location>
        <begin position="1"/>
        <end position="165"/>
    </location>
</feature>
<feature type="binding site" evidence="1">
    <location>
        <begin position="80"/>
        <end position="83"/>
    </location>
    <ligand>
        <name>substrate</name>
    </ligand>
</feature>
<feature type="binding site" evidence="1">
    <location>
        <position position="102"/>
    </location>
    <ligand>
        <name>substrate</name>
    </ligand>
</feature>
<feature type="binding site" evidence="1">
    <location>
        <position position="103"/>
    </location>
    <ligand>
        <name>a divalent metal cation</name>
        <dbReference type="ChEBI" id="CHEBI:60240"/>
    </ligand>
</feature>
<comment type="function">
    <text evidence="1">Catalyzes the aldol cleavage of 4-hydroxy-4-methyl-2-oxoglutarate (HMG) into 2 molecules of pyruvate. Also contains a secondary oxaloacetate (OAA) decarboxylase activity due to the common pyruvate enolate transition state formed following C-C bond cleavage in the retro-aldol and decarboxylation reactions (By similarity).</text>
</comment>
<comment type="catalytic activity">
    <reaction>
        <text>4-hydroxy-4-methyl-2-oxoglutarate = 2 pyruvate</text>
        <dbReference type="Rhea" id="RHEA:22748"/>
        <dbReference type="ChEBI" id="CHEBI:15361"/>
        <dbReference type="ChEBI" id="CHEBI:58276"/>
        <dbReference type="EC" id="4.1.3.17"/>
    </reaction>
</comment>
<comment type="catalytic activity">
    <reaction>
        <text>oxaloacetate + H(+) = pyruvate + CO2</text>
        <dbReference type="Rhea" id="RHEA:15641"/>
        <dbReference type="ChEBI" id="CHEBI:15361"/>
        <dbReference type="ChEBI" id="CHEBI:15378"/>
        <dbReference type="ChEBI" id="CHEBI:16452"/>
        <dbReference type="ChEBI" id="CHEBI:16526"/>
        <dbReference type="EC" id="4.1.1.112"/>
    </reaction>
</comment>
<comment type="cofactor">
    <cofactor evidence="1">
        <name>a divalent metal cation</name>
        <dbReference type="ChEBI" id="CHEBI:60240"/>
    </cofactor>
    <text evidence="1">Divalent metal cation.</text>
</comment>
<comment type="subunit">
    <text evidence="1">Homotrimer.</text>
</comment>
<comment type="similarity">
    <text evidence="2">Belongs to the class II aldolase/RraA-like family.</text>
</comment>
<dbReference type="EC" id="4.1.3.17"/>
<dbReference type="EC" id="4.1.1.112"/>
<dbReference type="EMBL" id="CP000124">
    <property type="protein sequence ID" value="ABA47695.1"/>
    <property type="molecule type" value="Genomic_DNA"/>
</dbReference>
<dbReference type="SMR" id="Q3JQZ3"/>
<dbReference type="EnsemblBacteria" id="ABA47695">
    <property type="protein sequence ID" value="ABA47695"/>
    <property type="gene ID" value="BURPS1710b_2618"/>
</dbReference>
<dbReference type="KEGG" id="bpm:BURPS1710b_2618"/>
<dbReference type="HOGENOM" id="CLU_072626_4_0_4"/>
<dbReference type="Proteomes" id="UP000002700">
    <property type="component" value="Chromosome I"/>
</dbReference>
<dbReference type="GO" id="GO:0047443">
    <property type="term" value="F:4-hydroxy-4-methyl-2-oxoglutarate aldolase activity"/>
    <property type="evidence" value="ECO:0007669"/>
    <property type="project" value="UniProtKB-EC"/>
</dbReference>
<dbReference type="GO" id="GO:0046872">
    <property type="term" value="F:metal ion binding"/>
    <property type="evidence" value="ECO:0007669"/>
    <property type="project" value="UniProtKB-KW"/>
</dbReference>
<dbReference type="GO" id="GO:0008948">
    <property type="term" value="F:oxaloacetate decarboxylase activity"/>
    <property type="evidence" value="ECO:0007669"/>
    <property type="project" value="UniProtKB-EC"/>
</dbReference>
<dbReference type="GO" id="GO:0008428">
    <property type="term" value="F:ribonuclease inhibitor activity"/>
    <property type="evidence" value="ECO:0007669"/>
    <property type="project" value="InterPro"/>
</dbReference>
<dbReference type="GO" id="GO:0051252">
    <property type="term" value="P:regulation of RNA metabolic process"/>
    <property type="evidence" value="ECO:0007669"/>
    <property type="project" value="InterPro"/>
</dbReference>
<dbReference type="CDD" id="cd16841">
    <property type="entry name" value="RraA_family"/>
    <property type="match status" value="1"/>
</dbReference>
<dbReference type="Gene3D" id="3.50.30.40">
    <property type="entry name" value="Ribonuclease E inhibitor RraA/RraA-like"/>
    <property type="match status" value="1"/>
</dbReference>
<dbReference type="InterPro" id="IPR010203">
    <property type="entry name" value="RraA"/>
</dbReference>
<dbReference type="InterPro" id="IPR005493">
    <property type="entry name" value="RraA/RraA-like"/>
</dbReference>
<dbReference type="InterPro" id="IPR036704">
    <property type="entry name" value="RraA/RraA-like_sf"/>
</dbReference>
<dbReference type="NCBIfam" id="TIGR01935">
    <property type="entry name" value="NOT-MenG"/>
    <property type="match status" value="1"/>
</dbReference>
<dbReference type="NCBIfam" id="NF006875">
    <property type="entry name" value="PRK09372.1"/>
    <property type="match status" value="1"/>
</dbReference>
<dbReference type="PANTHER" id="PTHR33254">
    <property type="entry name" value="4-HYDROXY-4-METHYL-2-OXOGLUTARATE ALDOLASE 3-RELATED"/>
    <property type="match status" value="1"/>
</dbReference>
<dbReference type="PANTHER" id="PTHR33254:SF4">
    <property type="entry name" value="4-HYDROXY-4-METHYL-2-OXOGLUTARATE ALDOLASE 3-RELATED"/>
    <property type="match status" value="1"/>
</dbReference>
<dbReference type="Pfam" id="PF03737">
    <property type="entry name" value="RraA-like"/>
    <property type="match status" value="1"/>
</dbReference>
<dbReference type="SUPFAM" id="SSF89562">
    <property type="entry name" value="RraA-like"/>
    <property type="match status" value="1"/>
</dbReference>
<sequence length="165" mass="17301">MMFATTDLCDAHEDRLAAGTLRVLEPVFRPFGGVRRFAGPAATLKLFEDNSLVRTALEQDGAGRVLVVDGGGSLRCALVGGNLGKLAEKNGWAGIVVNGCVRDSDELAECRVGVLALAAHPRKSDKRGAGVSDAPVDVRGTRIVPGDWIYADADGVLVSDDALLE</sequence>
<name>RRAAH_BURP1</name>
<proteinExistence type="inferred from homology"/>
<organism>
    <name type="scientific">Burkholderia pseudomallei (strain 1710b)</name>
    <dbReference type="NCBI Taxonomy" id="320372"/>
    <lineage>
        <taxon>Bacteria</taxon>
        <taxon>Pseudomonadati</taxon>
        <taxon>Pseudomonadota</taxon>
        <taxon>Betaproteobacteria</taxon>
        <taxon>Burkholderiales</taxon>
        <taxon>Burkholderiaceae</taxon>
        <taxon>Burkholderia</taxon>
        <taxon>pseudomallei group</taxon>
    </lineage>
</organism>
<keyword id="KW-0456">Lyase</keyword>
<keyword id="KW-0479">Metal-binding</keyword>
<protein>
    <recommendedName>
        <fullName>Putative 4-hydroxy-4-methyl-2-oxoglutarate aldolase</fullName>
        <shortName>HMG aldolase</shortName>
        <ecNumber>4.1.3.17</ecNumber>
    </recommendedName>
    <alternativeName>
        <fullName>Oxaloacetate decarboxylase</fullName>
        <shortName>OAA decarboxylase</shortName>
        <ecNumber>4.1.1.112</ecNumber>
    </alternativeName>
    <alternativeName>
        <fullName>Regulator of ribonuclease activity homolog</fullName>
    </alternativeName>
    <alternativeName>
        <fullName>RraA-like protein</fullName>
    </alternativeName>
</protein>
<accession>Q3JQZ3</accession>
<reference key="1">
    <citation type="journal article" date="2010" name="Genome Biol. Evol.">
        <title>Continuing evolution of Burkholderia mallei through genome reduction and large-scale rearrangements.</title>
        <authorList>
            <person name="Losada L."/>
            <person name="Ronning C.M."/>
            <person name="DeShazer D."/>
            <person name="Woods D."/>
            <person name="Fedorova N."/>
            <person name="Kim H.S."/>
            <person name="Shabalina S.A."/>
            <person name="Pearson T.R."/>
            <person name="Brinkac L."/>
            <person name="Tan P."/>
            <person name="Nandi T."/>
            <person name="Crabtree J."/>
            <person name="Badger J."/>
            <person name="Beckstrom-Sternberg S."/>
            <person name="Saqib M."/>
            <person name="Schutzer S.E."/>
            <person name="Keim P."/>
            <person name="Nierman W.C."/>
        </authorList>
    </citation>
    <scope>NUCLEOTIDE SEQUENCE [LARGE SCALE GENOMIC DNA]</scope>
    <source>
        <strain>1710b</strain>
    </source>
</reference>
<gene>
    <name type="ordered locus">BURPS1710b_2618</name>
</gene>
<evidence type="ECO:0000250" key="1"/>
<evidence type="ECO:0000305" key="2"/>